<comment type="similarity">
    <text evidence="2">Belongs to the thiolase-like superfamily. Thiolase family.</text>
</comment>
<organism>
    <name type="scientific">Staphylococcus aureus (strain MSSA476)</name>
    <dbReference type="NCBI Taxonomy" id="282459"/>
    <lineage>
        <taxon>Bacteria</taxon>
        <taxon>Bacillati</taxon>
        <taxon>Bacillota</taxon>
        <taxon>Bacilli</taxon>
        <taxon>Bacillales</taxon>
        <taxon>Staphylococcaceae</taxon>
        <taxon>Staphylococcus</taxon>
    </lineage>
</organism>
<sequence>MNQAVIVAAKRTAFGKYGGTLKHLEPEQLLKPLFQHFKEKYLEVISKIDDVVLGNVVGNGGNIARKALLEAGLKDSIPGVTIDRQCGSGLESVQYACRMIQAGAGKVYIAGGVESTSRAPWKIKRPHSVYETALPEFYERASFAPEMSDPSMIQGAENVAKMYDVSRELQDEFAYRSHQLTAENVKNGNISQEILPITVKGEIFNTDESLKSHIPKDNFGRFKPVIKGGTVTAANSCMKNDGAVLLLIMEKDMAYELGFEHGLLFKDGVTVGVDSNFPGIGPVPAISNLLKRNQLTIENIEVIEINEAFSAQVVACQQALNISNTQLNIWGGALASGHPYGASGAQLVTRLFYMFDKETMIASMGIGGGLGNAALFTRF</sequence>
<keyword id="KW-0012">Acyltransferase</keyword>
<keyword id="KW-0808">Transferase</keyword>
<accession>Q6GBR1</accession>
<feature type="chain" id="PRO_0000206430" description="Putative acetyl-CoA C-acetyltransferase VraB">
    <location>
        <begin position="1"/>
        <end position="379"/>
    </location>
</feature>
<feature type="active site" description="Acyl-thioester intermediate" evidence="1">
    <location>
        <position position="86"/>
    </location>
</feature>
<feature type="active site" description="Proton acceptor" evidence="1">
    <location>
        <position position="338"/>
    </location>
</feature>
<proteinExistence type="inferred from homology"/>
<protein>
    <recommendedName>
        <fullName>Putative acetyl-CoA C-acetyltransferase VraB</fullName>
        <ecNumber>2.3.1.-</ecNumber>
    </recommendedName>
</protein>
<gene>
    <name type="primary">vraB</name>
    <name type="ordered locus">SAS0534</name>
</gene>
<evidence type="ECO:0000250" key="1"/>
<evidence type="ECO:0000305" key="2"/>
<reference key="1">
    <citation type="journal article" date="2004" name="Proc. Natl. Acad. Sci. U.S.A.">
        <title>Complete genomes of two clinical Staphylococcus aureus strains: evidence for the rapid evolution of virulence and drug resistance.</title>
        <authorList>
            <person name="Holden M.T.G."/>
            <person name="Feil E.J."/>
            <person name="Lindsay J.A."/>
            <person name="Peacock S.J."/>
            <person name="Day N.P.J."/>
            <person name="Enright M.C."/>
            <person name="Foster T.J."/>
            <person name="Moore C.E."/>
            <person name="Hurst L."/>
            <person name="Atkin R."/>
            <person name="Barron A."/>
            <person name="Bason N."/>
            <person name="Bentley S.D."/>
            <person name="Chillingworth C."/>
            <person name="Chillingworth T."/>
            <person name="Churcher C."/>
            <person name="Clark L."/>
            <person name="Corton C."/>
            <person name="Cronin A."/>
            <person name="Doggett J."/>
            <person name="Dowd L."/>
            <person name="Feltwell T."/>
            <person name="Hance Z."/>
            <person name="Harris B."/>
            <person name="Hauser H."/>
            <person name="Holroyd S."/>
            <person name="Jagels K."/>
            <person name="James K.D."/>
            <person name="Lennard N."/>
            <person name="Line A."/>
            <person name="Mayes R."/>
            <person name="Moule S."/>
            <person name="Mungall K."/>
            <person name="Ormond D."/>
            <person name="Quail M.A."/>
            <person name="Rabbinowitsch E."/>
            <person name="Rutherford K.M."/>
            <person name="Sanders M."/>
            <person name="Sharp S."/>
            <person name="Simmonds M."/>
            <person name="Stevens K."/>
            <person name="Whitehead S."/>
            <person name="Barrell B.G."/>
            <person name="Spratt B.G."/>
            <person name="Parkhill J."/>
        </authorList>
    </citation>
    <scope>NUCLEOTIDE SEQUENCE [LARGE SCALE GENOMIC DNA]</scope>
    <source>
        <strain>MSSA476</strain>
    </source>
</reference>
<dbReference type="EC" id="2.3.1.-"/>
<dbReference type="EMBL" id="BX571857">
    <property type="protein sequence ID" value="CAG42309.1"/>
    <property type="molecule type" value="Genomic_DNA"/>
</dbReference>
<dbReference type="RefSeq" id="WP_001070666.1">
    <property type="nucleotide sequence ID" value="NC_002953.3"/>
</dbReference>
<dbReference type="SMR" id="Q6GBR1"/>
<dbReference type="KEGG" id="sas:SAS0534"/>
<dbReference type="HOGENOM" id="CLU_031026_2_1_9"/>
<dbReference type="GO" id="GO:0005737">
    <property type="term" value="C:cytoplasm"/>
    <property type="evidence" value="ECO:0007669"/>
    <property type="project" value="UniProtKB-ARBA"/>
</dbReference>
<dbReference type="GO" id="GO:0003988">
    <property type="term" value="F:acetyl-CoA C-acyltransferase activity"/>
    <property type="evidence" value="ECO:0007669"/>
    <property type="project" value="TreeGrafter"/>
</dbReference>
<dbReference type="GO" id="GO:0006635">
    <property type="term" value="P:fatty acid beta-oxidation"/>
    <property type="evidence" value="ECO:0007669"/>
    <property type="project" value="TreeGrafter"/>
</dbReference>
<dbReference type="GO" id="GO:0010124">
    <property type="term" value="P:phenylacetate catabolic process"/>
    <property type="evidence" value="ECO:0007669"/>
    <property type="project" value="TreeGrafter"/>
</dbReference>
<dbReference type="CDD" id="cd00751">
    <property type="entry name" value="thiolase"/>
    <property type="match status" value="1"/>
</dbReference>
<dbReference type="Gene3D" id="3.40.47.10">
    <property type="match status" value="2"/>
</dbReference>
<dbReference type="InterPro" id="IPR002155">
    <property type="entry name" value="Thiolase"/>
</dbReference>
<dbReference type="InterPro" id="IPR016039">
    <property type="entry name" value="Thiolase-like"/>
</dbReference>
<dbReference type="InterPro" id="IPR050215">
    <property type="entry name" value="Thiolase-like_sf_Thiolase"/>
</dbReference>
<dbReference type="InterPro" id="IPR020617">
    <property type="entry name" value="Thiolase_C"/>
</dbReference>
<dbReference type="InterPro" id="IPR020613">
    <property type="entry name" value="Thiolase_CS"/>
</dbReference>
<dbReference type="InterPro" id="IPR020616">
    <property type="entry name" value="Thiolase_N"/>
</dbReference>
<dbReference type="NCBIfam" id="TIGR01930">
    <property type="entry name" value="AcCoA-C-Actrans"/>
    <property type="match status" value="1"/>
</dbReference>
<dbReference type="PANTHER" id="PTHR43853">
    <property type="entry name" value="3-KETOACYL-COA THIOLASE, PEROXISOMAL"/>
    <property type="match status" value="1"/>
</dbReference>
<dbReference type="PANTHER" id="PTHR43853:SF3">
    <property type="entry name" value="ACETYL-COA C-ACETYLTRANSFERASE YHFS-RELATED"/>
    <property type="match status" value="1"/>
</dbReference>
<dbReference type="Pfam" id="PF02803">
    <property type="entry name" value="Thiolase_C"/>
    <property type="match status" value="1"/>
</dbReference>
<dbReference type="Pfam" id="PF00108">
    <property type="entry name" value="Thiolase_N"/>
    <property type="match status" value="1"/>
</dbReference>
<dbReference type="PIRSF" id="PIRSF000429">
    <property type="entry name" value="Ac-CoA_Ac_transf"/>
    <property type="match status" value="1"/>
</dbReference>
<dbReference type="SUPFAM" id="SSF53901">
    <property type="entry name" value="Thiolase-like"/>
    <property type="match status" value="2"/>
</dbReference>
<dbReference type="PROSITE" id="PS00737">
    <property type="entry name" value="THIOLASE_2"/>
    <property type="match status" value="1"/>
</dbReference>
<name>VRAB_STAAS</name>